<comment type="function">
    <text evidence="2">Catalyzes the hydrolysis of N(4)-acetylcytidine (ac4C).</text>
</comment>
<comment type="catalytic activity">
    <reaction evidence="2">
        <text>N(4)-acetylcytidine + H2O = cytidine + acetate + H(+)</text>
        <dbReference type="Rhea" id="RHEA:62932"/>
        <dbReference type="ChEBI" id="CHEBI:15377"/>
        <dbReference type="ChEBI" id="CHEBI:15378"/>
        <dbReference type="ChEBI" id="CHEBI:17562"/>
        <dbReference type="ChEBI" id="CHEBI:30089"/>
        <dbReference type="ChEBI" id="CHEBI:70989"/>
        <dbReference type="EC" id="3.5.1.135"/>
    </reaction>
</comment>
<comment type="catalytic activity">
    <reaction evidence="2">
        <text>N(4)-acetyl-2'-deoxycytidine + H2O = 2'-deoxycytidine + acetate + H(+)</text>
        <dbReference type="Rhea" id="RHEA:62936"/>
        <dbReference type="ChEBI" id="CHEBI:15377"/>
        <dbReference type="ChEBI" id="CHEBI:15378"/>
        <dbReference type="ChEBI" id="CHEBI:15698"/>
        <dbReference type="ChEBI" id="CHEBI:30089"/>
        <dbReference type="ChEBI" id="CHEBI:146133"/>
        <dbReference type="EC" id="3.5.1.135"/>
    </reaction>
</comment>
<comment type="catalytic activity">
    <reaction evidence="2">
        <text>N(4)-acetylcytosine + H2O = cytosine + acetate + H(+)</text>
        <dbReference type="Rhea" id="RHEA:62940"/>
        <dbReference type="ChEBI" id="CHEBI:15377"/>
        <dbReference type="ChEBI" id="CHEBI:15378"/>
        <dbReference type="ChEBI" id="CHEBI:16040"/>
        <dbReference type="ChEBI" id="CHEBI:30089"/>
        <dbReference type="ChEBI" id="CHEBI:146134"/>
        <dbReference type="EC" id="3.5.1.135"/>
    </reaction>
</comment>
<comment type="similarity">
    <text evidence="2">Belongs to the N(4)-acetylcytidine amidohydrolase family.</text>
</comment>
<gene>
    <name type="primary">yqfB</name>
    <name type="ordered locus">ECSE_3163</name>
</gene>
<proteinExistence type="inferred from homology"/>
<dbReference type="EC" id="3.5.1.135" evidence="2"/>
<dbReference type="EMBL" id="AP009240">
    <property type="protein sequence ID" value="BAG78687.1"/>
    <property type="molecule type" value="Genomic_DNA"/>
</dbReference>
<dbReference type="RefSeq" id="WP_001182945.1">
    <property type="nucleotide sequence ID" value="NC_011415.1"/>
</dbReference>
<dbReference type="SMR" id="B6I733"/>
<dbReference type="KEGG" id="ecy:ECSE_3163"/>
<dbReference type="HOGENOM" id="CLU_152586_0_0_6"/>
<dbReference type="Proteomes" id="UP000008199">
    <property type="component" value="Chromosome"/>
</dbReference>
<dbReference type="GO" id="GO:0005829">
    <property type="term" value="C:cytosol"/>
    <property type="evidence" value="ECO:0007669"/>
    <property type="project" value="TreeGrafter"/>
</dbReference>
<dbReference type="GO" id="GO:0016813">
    <property type="term" value="F:hydrolase activity, acting on carbon-nitrogen (but not peptide) bonds, in linear amidines"/>
    <property type="evidence" value="ECO:0007669"/>
    <property type="project" value="UniProtKB-UniRule"/>
</dbReference>
<dbReference type="GO" id="GO:0106251">
    <property type="term" value="F:N4-acetylcytidine amidohydrolase activity"/>
    <property type="evidence" value="ECO:0007669"/>
    <property type="project" value="RHEA"/>
</dbReference>
<dbReference type="CDD" id="cd06552">
    <property type="entry name" value="ASCH_yqfb_like"/>
    <property type="match status" value="1"/>
</dbReference>
<dbReference type="FunFam" id="2.30.130.30:FF:000001">
    <property type="entry name" value="UPF0267 protein YqfB"/>
    <property type="match status" value="1"/>
</dbReference>
<dbReference type="Gene3D" id="2.30.130.30">
    <property type="entry name" value="Hypothetical protein"/>
    <property type="match status" value="1"/>
</dbReference>
<dbReference type="HAMAP" id="MF_00684">
    <property type="entry name" value="ac4C_amidohydr"/>
    <property type="match status" value="1"/>
</dbReference>
<dbReference type="InterPro" id="IPR008314">
    <property type="entry name" value="AC4CH"/>
</dbReference>
<dbReference type="InterPro" id="IPR007374">
    <property type="entry name" value="ASCH_domain"/>
</dbReference>
<dbReference type="InterPro" id="IPR015947">
    <property type="entry name" value="PUA-like_sf"/>
</dbReference>
<dbReference type="NCBIfam" id="NF003443">
    <property type="entry name" value="PRK04980.1"/>
    <property type="match status" value="1"/>
</dbReference>
<dbReference type="PANTHER" id="PTHR38088">
    <property type="entry name" value="UCP029143 FAMILY PROTEIN"/>
    <property type="match status" value="1"/>
</dbReference>
<dbReference type="PANTHER" id="PTHR38088:SF2">
    <property type="entry name" value="UCP029143 FAMILY PROTEIN"/>
    <property type="match status" value="1"/>
</dbReference>
<dbReference type="Pfam" id="PF04266">
    <property type="entry name" value="ASCH"/>
    <property type="match status" value="1"/>
</dbReference>
<dbReference type="PIRSF" id="PIRSF029143">
    <property type="entry name" value="UCP029143"/>
    <property type="match status" value="1"/>
</dbReference>
<dbReference type="SMART" id="SM01022">
    <property type="entry name" value="ASCH"/>
    <property type="match status" value="1"/>
</dbReference>
<dbReference type="SUPFAM" id="SSF88697">
    <property type="entry name" value="PUA domain-like"/>
    <property type="match status" value="1"/>
</dbReference>
<accession>B6I733</accession>
<sequence length="103" mass="11918">MQPNDITFFQRFQDDILAGRKTITIRDESESHFKTGDVLRVGRFEDDGYFCTIEVTATSTITLETLTEKHAEQENMTLTELIKVIADIYPGQTQFYVIEFKCL</sequence>
<keyword id="KW-0378">Hydrolase</keyword>
<organism>
    <name type="scientific">Escherichia coli (strain SE11)</name>
    <dbReference type="NCBI Taxonomy" id="409438"/>
    <lineage>
        <taxon>Bacteria</taxon>
        <taxon>Pseudomonadati</taxon>
        <taxon>Pseudomonadota</taxon>
        <taxon>Gammaproteobacteria</taxon>
        <taxon>Enterobacterales</taxon>
        <taxon>Enterobacteriaceae</taxon>
        <taxon>Escherichia</taxon>
    </lineage>
</organism>
<reference key="1">
    <citation type="journal article" date="2008" name="DNA Res.">
        <title>Complete genome sequence and comparative analysis of the wild-type commensal Escherichia coli strain SE11 isolated from a healthy adult.</title>
        <authorList>
            <person name="Oshima K."/>
            <person name="Toh H."/>
            <person name="Ogura Y."/>
            <person name="Sasamoto H."/>
            <person name="Morita H."/>
            <person name="Park S.-H."/>
            <person name="Ooka T."/>
            <person name="Iyoda S."/>
            <person name="Taylor T.D."/>
            <person name="Hayashi T."/>
            <person name="Itoh K."/>
            <person name="Hattori M."/>
        </authorList>
    </citation>
    <scope>NUCLEOTIDE SEQUENCE [LARGE SCALE GENOMIC DNA]</scope>
    <source>
        <strain>SE11</strain>
    </source>
</reference>
<evidence type="ECO:0000255" key="1"/>
<evidence type="ECO:0000255" key="2">
    <source>
        <dbReference type="HAMAP-Rule" id="MF_00684"/>
    </source>
</evidence>
<feature type="chain" id="PRO_1000131788" description="N(4)-acetylcytidine amidohydrolase">
    <location>
        <begin position="1"/>
        <end position="103"/>
    </location>
</feature>
<feature type="domain" description="ASCH" evidence="1">
    <location>
        <begin position="6"/>
        <end position="101"/>
    </location>
</feature>
<feature type="active site" description="Proton acceptor" evidence="2">
    <location>
        <position position="21"/>
    </location>
</feature>
<feature type="active site" description="Nucleophile" evidence="2">
    <location>
        <position position="24"/>
    </location>
</feature>
<feature type="active site" description="Proton donor" evidence="2">
    <location>
        <position position="74"/>
    </location>
</feature>
<protein>
    <recommendedName>
        <fullName evidence="2">N(4)-acetylcytidine amidohydrolase</fullName>
        <shortName evidence="2">ac4C amidohydrolase</shortName>
        <ecNumber evidence="2">3.5.1.135</ecNumber>
    </recommendedName>
</protein>
<name>AC4CH_ECOSE</name>